<feature type="chain" id="PRO_0000071149" description="Diphthamide biosynthesis protein 4">
    <location>
        <begin position="1"/>
        <end position="188"/>
    </location>
</feature>
<feature type="domain" description="J" evidence="2">
    <location>
        <begin position="15"/>
        <end position="88"/>
    </location>
</feature>
<feature type="domain" description="DPH-type MB" evidence="3">
    <location>
        <begin position="106"/>
        <end position="168"/>
    </location>
</feature>
<feature type="binding site" evidence="3">
    <location>
        <position position="128"/>
    </location>
    <ligand>
        <name>Zn(2+)</name>
        <dbReference type="ChEBI" id="CHEBI:29105"/>
    </ligand>
</feature>
<feature type="binding site" evidence="3">
    <location>
        <position position="130"/>
    </location>
    <ligand>
        <name>Zn(2+)</name>
        <dbReference type="ChEBI" id="CHEBI:29105"/>
    </ligand>
</feature>
<feature type="binding site" evidence="3">
    <location>
        <position position="156"/>
    </location>
    <ligand>
        <name>Zn(2+)</name>
        <dbReference type="ChEBI" id="CHEBI:29105"/>
    </ligand>
</feature>
<feature type="binding site" evidence="3">
    <location>
        <position position="159"/>
    </location>
    <ligand>
        <name>Zn(2+)</name>
        <dbReference type="ChEBI" id="CHEBI:29105"/>
    </ligand>
</feature>
<evidence type="ECO:0000250" key="1"/>
<evidence type="ECO:0000255" key="2">
    <source>
        <dbReference type="PROSITE-ProRule" id="PRU00286"/>
    </source>
</evidence>
<evidence type="ECO:0000255" key="3">
    <source>
        <dbReference type="PROSITE-ProRule" id="PRU00456"/>
    </source>
</evidence>
<evidence type="ECO:0000305" key="4"/>
<protein>
    <recommendedName>
        <fullName>Diphthamide biosynthesis protein 4</fullName>
    </recommendedName>
</protein>
<reference key="1">
    <citation type="journal article" date="2007" name="Science">
        <title>The Fusarium graminearum genome reveals a link between localized polymorphism and pathogen specialization.</title>
        <authorList>
            <person name="Cuomo C.A."/>
            <person name="Gueldener U."/>
            <person name="Xu J.-R."/>
            <person name="Trail F."/>
            <person name="Turgeon B.G."/>
            <person name="Di Pietro A."/>
            <person name="Walton J.D."/>
            <person name="Ma L.-J."/>
            <person name="Baker S.E."/>
            <person name="Rep M."/>
            <person name="Adam G."/>
            <person name="Antoniw J."/>
            <person name="Baldwin T."/>
            <person name="Calvo S.E."/>
            <person name="Chang Y.-L."/>
            <person name="DeCaprio D."/>
            <person name="Gale L.R."/>
            <person name="Gnerre S."/>
            <person name="Goswami R.S."/>
            <person name="Hammond-Kosack K."/>
            <person name="Harris L.J."/>
            <person name="Hilburn K."/>
            <person name="Kennell J.C."/>
            <person name="Kroken S."/>
            <person name="Magnuson J.K."/>
            <person name="Mannhaupt G."/>
            <person name="Mauceli E.W."/>
            <person name="Mewes H.-W."/>
            <person name="Mitterbauer R."/>
            <person name="Muehlbauer G."/>
            <person name="Muensterkoetter M."/>
            <person name="Nelson D."/>
            <person name="O'Donnell K."/>
            <person name="Ouellet T."/>
            <person name="Qi W."/>
            <person name="Quesneville H."/>
            <person name="Roncero M.I.G."/>
            <person name="Seong K.-Y."/>
            <person name="Tetko I.V."/>
            <person name="Urban M."/>
            <person name="Waalwijk C."/>
            <person name="Ward T.J."/>
            <person name="Yao J."/>
            <person name="Birren B.W."/>
            <person name="Kistler H.C."/>
        </authorList>
    </citation>
    <scope>NUCLEOTIDE SEQUENCE [LARGE SCALE GENOMIC DNA]</scope>
    <source>
        <strain>ATCC MYA-4620 / CBS 123657 / FGSC 9075 / NRRL 31084 / PH-1</strain>
    </source>
</reference>
<reference key="2">
    <citation type="journal article" date="2010" name="Nature">
        <title>Comparative genomics reveals mobile pathogenicity chromosomes in Fusarium.</title>
        <authorList>
            <person name="Ma L.-J."/>
            <person name="van der Does H.C."/>
            <person name="Borkovich K.A."/>
            <person name="Coleman J.J."/>
            <person name="Daboussi M.-J."/>
            <person name="Di Pietro A."/>
            <person name="Dufresne M."/>
            <person name="Freitag M."/>
            <person name="Grabherr M."/>
            <person name="Henrissat B."/>
            <person name="Houterman P.M."/>
            <person name="Kang S."/>
            <person name="Shim W.-B."/>
            <person name="Woloshuk C."/>
            <person name="Xie X."/>
            <person name="Xu J.-R."/>
            <person name="Antoniw J."/>
            <person name="Baker S.E."/>
            <person name="Bluhm B.H."/>
            <person name="Breakspear A."/>
            <person name="Brown D.W."/>
            <person name="Butchko R.A.E."/>
            <person name="Chapman S."/>
            <person name="Coulson R."/>
            <person name="Coutinho P.M."/>
            <person name="Danchin E.G.J."/>
            <person name="Diener A."/>
            <person name="Gale L.R."/>
            <person name="Gardiner D.M."/>
            <person name="Goff S."/>
            <person name="Hammond-Kosack K.E."/>
            <person name="Hilburn K."/>
            <person name="Hua-Van A."/>
            <person name="Jonkers W."/>
            <person name="Kazan K."/>
            <person name="Kodira C.D."/>
            <person name="Koehrsen M."/>
            <person name="Kumar L."/>
            <person name="Lee Y.-H."/>
            <person name="Li L."/>
            <person name="Manners J.M."/>
            <person name="Miranda-Saavedra D."/>
            <person name="Mukherjee M."/>
            <person name="Park G."/>
            <person name="Park J."/>
            <person name="Park S.-Y."/>
            <person name="Proctor R.H."/>
            <person name="Regev A."/>
            <person name="Ruiz-Roldan M.C."/>
            <person name="Sain D."/>
            <person name="Sakthikumar S."/>
            <person name="Sykes S."/>
            <person name="Schwartz D.C."/>
            <person name="Turgeon B.G."/>
            <person name="Wapinski I."/>
            <person name="Yoder O."/>
            <person name="Young S."/>
            <person name="Zeng Q."/>
            <person name="Zhou S."/>
            <person name="Galagan J."/>
            <person name="Cuomo C.A."/>
            <person name="Kistler H.C."/>
            <person name="Rep M."/>
        </authorList>
    </citation>
    <scope>GENOME REANNOTATION</scope>
    <source>
        <strain>ATCC MYA-4620 / CBS 123657 / FGSC 9075 / NRRL 31084 / PH-1</strain>
    </source>
</reference>
<reference key="3">
    <citation type="journal article" date="2015" name="BMC Genomics">
        <title>The completed genome sequence of the pathogenic ascomycete fungus Fusarium graminearum.</title>
        <authorList>
            <person name="King R."/>
            <person name="Urban M."/>
            <person name="Hammond-Kosack M.C.U."/>
            <person name="Hassani-Pak K."/>
            <person name="Hammond-Kosack K.E."/>
        </authorList>
    </citation>
    <scope>NUCLEOTIDE SEQUENCE [LARGE SCALE GENOMIC DNA]</scope>
    <source>
        <strain>ATCC MYA-4620 / CBS 123657 / FGSC 9075 / NRRL 31084 / PH-1</strain>
    </source>
</reference>
<comment type="function">
    <text evidence="1">Required for the first step of diphthamide biosynthesis, the transfer of 3-amino-3-carboxypropyl from S-adenosyl-L-methionine to a histidine residue. Diphthamide is a post-translational modification of histidine which occurs in elongation factor 2 (By similarity).</text>
</comment>
<comment type="pathway">
    <text>Protein modification; peptidyl-diphthamide biosynthesis.</text>
</comment>
<comment type="subcellular location">
    <subcellularLocation>
        <location evidence="1">Cytoplasm</location>
    </subcellularLocation>
    <subcellularLocation>
        <location evidence="1">Nucleus</location>
    </subcellularLocation>
</comment>
<comment type="domain">
    <text evidence="3">The DPH-type metal-binding (MB) domain can bind either zinc or iron ions.</text>
</comment>
<comment type="similarity">
    <text evidence="4">Belongs to the DPH4 family.</text>
</comment>
<dbReference type="EMBL" id="DS231666">
    <property type="protein sequence ID" value="ESU12994.1"/>
    <property type="molecule type" value="Genomic_DNA"/>
</dbReference>
<dbReference type="EMBL" id="HG970335">
    <property type="protein sequence ID" value="CEF84071.1"/>
    <property type="molecule type" value="Genomic_DNA"/>
</dbReference>
<dbReference type="RefSeq" id="XP_011326501.1">
    <property type="nucleotide sequence ID" value="XM_011328199.1"/>
</dbReference>
<dbReference type="FunCoup" id="Q4I7G0">
    <property type="interactions" value="362"/>
</dbReference>
<dbReference type="STRING" id="229533.Q4I7G0"/>
<dbReference type="KEGG" id="fgr:FGSG_12996"/>
<dbReference type="VEuPathDB" id="FungiDB:FGRAMPH1_01G23323"/>
<dbReference type="eggNOG" id="KOG0714">
    <property type="taxonomic scope" value="Eukaryota"/>
</dbReference>
<dbReference type="HOGENOM" id="CLU_017633_7_0_1"/>
<dbReference type="InParanoid" id="Q4I7G0"/>
<dbReference type="OrthoDB" id="119180at110618"/>
<dbReference type="UniPathway" id="UPA00559"/>
<dbReference type="Proteomes" id="UP000070720">
    <property type="component" value="Chromosome 4"/>
</dbReference>
<dbReference type="GO" id="GO:0005737">
    <property type="term" value="C:cytoplasm"/>
    <property type="evidence" value="ECO:0007669"/>
    <property type="project" value="UniProtKB-SubCell"/>
</dbReference>
<dbReference type="GO" id="GO:0005634">
    <property type="term" value="C:nucleus"/>
    <property type="evidence" value="ECO:0007669"/>
    <property type="project" value="UniProtKB-SubCell"/>
</dbReference>
<dbReference type="GO" id="GO:0046872">
    <property type="term" value="F:metal ion binding"/>
    <property type="evidence" value="ECO:0007669"/>
    <property type="project" value="UniProtKB-KW"/>
</dbReference>
<dbReference type="GO" id="GO:0017183">
    <property type="term" value="P:protein histidyl modification to diphthamide"/>
    <property type="evidence" value="ECO:0007669"/>
    <property type="project" value="UniProtKB-UniPathway"/>
</dbReference>
<dbReference type="CDD" id="cd06257">
    <property type="entry name" value="DnaJ"/>
    <property type="match status" value="1"/>
</dbReference>
<dbReference type="Gene3D" id="1.10.287.110">
    <property type="entry name" value="DnaJ domain"/>
    <property type="match status" value="1"/>
</dbReference>
<dbReference type="Gene3D" id="3.10.660.10">
    <property type="entry name" value="DPH Zinc finger"/>
    <property type="match status" value="1"/>
</dbReference>
<dbReference type="InterPro" id="IPR001623">
    <property type="entry name" value="DnaJ_domain"/>
</dbReference>
<dbReference type="InterPro" id="IPR044248">
    <property type="entry name" value="DPH3/4-like"/>
</dbReference>
<dbReference type="InterPro" id="IPR007872">
    <property type="entry name" value="DPH_MB_dom"/>
</dbReference>
<dbReference type="InterPro" id="IPR036671">
    <property type="entry name" value="DPH_MB_sf"/>
</dbReference>
<dbReference type="InterPro" id="IPR036869">
    <property type="entry name" value="J_dom_sf"/>
</dbReference>
<dbReference type="PANTHER" id="PTHR21454:SF46">
    <property type="entry name" value="DIPHTHAMIDE BIOSYNTHESIS PROTEIN 4"/>
    <property type="match status" value="1"/>
</dbReference>
<dbReference type="PANTHER" id="PTHR21454">
    <property type="entry name" value="DPH3 HOMOLOG-RELATED"/>
    <property type="match status" value="1"/>
</dbReference>
<dbReference type="Pfam" id="PF00226">
    <property type="entry name" value="DnaJ"/>
    <property type="match status" value="1"/>
</dbReference>
<dbReference type="Pfam" id="PF05207">
    <property type="entry name" value="Zn_ribbon_CSL"/>
    <property type="match status" value="1"/>
</dbReference>
<dbReference type="SMART" id="SM00271">
    <property type="entry name" value="DnaJ"/>
    <property type="match status" value="1"/>
</dbReference>
<dbReference type="SUPFAM" id="SSF46565">
    <property type="entry name" value="Chaperone J-domain"/>
    <property type="match status" value="1"/>
</dbReference>
<dbReference type="SUPFAM" id="SSF144217">
    <property type="entry name" value="CSL zinc finger"/>
    <property type="match status" value="1"/>
</dbReference>
<dbReference type="PROSITE" id="PS50076">
    <property type="entry name" value="DNAJ_2"/>
    <property type="match status" value="1"/>
</dbReference>
<dbReference type="PROSITE" id="PS51074">
    <property type="entry name" value="DPH_MB"/>
    <property type="match status" value="1"/>
</dbReference>
<keyword id="KW-0963">Cytoplasm</keyword>
<keyword id="KW-0408">Iron</keyword>
<keyword id="KW-0479">Metal-binding</keyword>
<keyword id="KW-0539">Nucleus</keyword>
<keyword id="KW-1185">Reference proteome</keyword>
<keyword id="KW-0862">Zinc</keyword>
<accession>Q4I7G0</accession>
<accession>A0A0E0SCA8</accession>
<accession>V6RFF0</accession>
<organism>
    <name type="scientific">Gibberella zeae (strain ATCC MYA-4620 / CBS 123657 / FGSC 9075 / NRRL 31084 / PH-1)</name>
    <name type="common">Wheat head blight fungus</name>
    <name type="synonym">Fusarium graminearum</name>
    <dbReference type="NCBI Taxonomy" id="229533"/>
    <lineage>
        <taxon>Eukaryota</taxon>
        <taxon>Fungi</taxon>
        <taxon>Dikarya</taxon>
        <taxon>Ascomycota</taxon>
        <taxon>Pezizomycotina</taxon>
        <taxon>Sordariomycetes</taxon>
        <taxon>Hypocreomycetidae</taxon>
        <taxon>Hypocreales</taxon>
        <taxon>Nectriaceae</taxon>
        <taxon>Fusarium</taxon>
    </lineage>
</organism>
<gene>
    <name type="primary">DPH4</name>
    <name type="ORF">FGRRES_12996</name>
    <name type="ORF">FGSG_06848</name>
</gene>
<proteinExistence type="inferred from homology"/>
<sequence length="188" mass="20774">MTSSQSISSSADTATHYQVLNITSALLDTQHDSTPLIKRAYHRALLRNHPDKVANSDPSSVFFTVDQITTALNVLSSPSARVAYDAALRVSRPTGAAGRDGSFQTGVENVDLDDLAFDEDQECWYRPCRCGNEHSYEFREADLEEVSEEGELVVGCLDCSLWLRVHFAVLDENEDDVQPSSTTSKDKI</sequence>
<name>DPH4_GIBZE</name>